<dbReference type="EC" id="7.1.1.2" evidence="1"/>
<dbReference type="EMBL" id="X63726">
    <property type="protein sequence ID" value="CAA45264.1"/>
    <property type="molecule type" value="Genomic_DNA"/>
</dbReference>
<dbReference type="EMBL" id="AM181032">
    <property type="protein sequence ID" value="CAJ57086.1"/>
    <property type="molecule type" value="Genomic_DNA"/>
</dbReference>
<dbReference type="PIR" id="S26158">
    <property type="entry name" value="S26158"/>
</dbReference>
<dbReference type="RefSeq" id="NP_006935.1">
    <property type="nucleotide sequence ID" value="NC_001325.1"/>
</dbReference>
<dbReference type="SMR" id="Q00541"/>
<dbReference type="GeneID" id="807651"/>
<dbReference type="CTD" id="4537"/>
<dbReference type="OrthoDB" id="27929at33554"/>
<dbReference type="GO" id="GO:0005743">
    <property type="term" value="C:mitochondrial inner membrane"/>
    <property type="evidence" value="ECO:0000250"/>
    <property type="project" value="UniProtKB"/>
</dbReference>
<dbReference type="GO" id="GO:0030964">
    <property type="term" value="C:NADH dehydrogenase complex"/>
    <property type="evidence" value="ECO:0007669"/>
    <property type="project" value="TreeGrafter"/>
</dbReference>
<dbReference type="GO" id="GO:0008137">
    <property type="term" value="F:NADH dehydrogenase (ubiquinone) activity"/>
    <property type="evidence" value="ECO:0000250"/>
    <property type="project" value="UniProtKB"/>
</dbReference>
<dbReference type="GO" id="GO:0006120">
    <property type="term" value="P:mitochondrial electron transport, NADH to ubiquinone"/>
    <property type="evidence" value="ECO:0000250"/>
    <property type="project" value="UniProtKB"/>
</dbReference>
<dbReference type="FunFam" id="1.20.58.1610:FF:000004">
    <property type="entry name" value="NADH-quinone oxidoreductase subunit A"/>
    <property type="match status" value="1"/>
</dbReference>
<dbReference type="Gene3D" id="1.20.58.1610">
    <property type="entry name" value="NADH:ubiquinone/plastoquinone oxidoreductase, chain 3"/>
    <property type="match status" value="1"/>
</dbReference>
<dbReference type="InterPro" id="IPR000440">
    <property type="entry name" value="NADH_UbQ/plastoQ_OxRdtase_su3"/>
</dbReference>
<dbReference type="InterPro" id="IPR038430">
    <property type="entry name" value="NDAH_ubi_oxred_su3_sf"/>
</dbReference>
<dbReference type="PANTHER" id="PTHR11058">
    <property type="entry name" value="NADH-UBIQUINONE OXIDOREDUCTASE CHAIN 3"/>
    <property type="match status" value="1"/>
</dbReference>
<dbReference type="PANTHER" id="PTHR11058:SF9">
    <property type="entry name" value="NADH-UBIQUINONE OXIDOREDUCTASE CHAIN 3"/>
    <property type="match status" value="1"/>
</dbReference>
<dbReference type="Pfam" id="PF00507">
    <property type="entry name" value="Oxidored_q4"/>
    <property type="match status" value="1"/>
</dbReference>
<proteinExistence type="inferred from homology"/>
<keyword id="KW-0249">Electron transport</keyword>
<keyword id="KW-0472">Membrane</keyword>
<keyword id="KW-0496">Mitochondrion</keyword>
<keyword id="KW-0999">Mitochondrion inner membrane</keyword>
<keyword id="KW-0520">NAD</keyword>
<keyword id="KW-0679">Respiratory chain</keyword>
<keyword id="KW-1278">Translocase</keyword>
<keyword id="KW-0812">Transmembrane</keyword>
<keyword id="KW-1133">Transmembrane helix</keyword>
<keyword id="KW-0813">Transport</keyword>
<keyword id="KW-0830">Ubiquinone</keyword>
<gene>
    <name evidence="1" type="primary">MT-ND3</name>
    <name type="synonym">MTND3</name>
    <name type="synonym">NADH3</name>
    <name type="synonym">ND3</name>
</gene>
<accession>Q00541</accession>
<accession>Q08H12</accession>
<comment type="function">
    <text evidence="1">Core subunit of the mitochondrial membrane respiratory chain NADH dehydrogenase (Complex I) which catalyzes electron transfer from NADH through the respiratory chain, using ubiquinone as an electron acceptor. Essential for the catalytic activity of complex I.</text>
</comment>
<comment type="catalytic activity">
    <reaction evidence="1">
        <text>a ubiquinone + NADH + 5 H(+)(in) = a ubiquinol + NAD(+) + 4 H(+)(out)</text>
        <dbReference type="Rhea" id="RHEA:29091"/>
        <dbReference type="Rhea" id="RHEA-COMP:9565"/>
        <dbReference type="Rhea" id="RHEA-COMP:9566"/>
        <dbReference type="ChEBI" id="CHEBI:15378"/>
        <dbReference type="ChEBI" id="CHEBI:16389"/>
        <dbReference type="ChEBI" id="CHEBI:17976"/>
        <dbReference type="ChEBI" id="CHEBI:57540"/>
        <dbReference type="ChEBI" id="CHEBI:57945"/>
        <dbReference type="EC" id="7.1.1.2"/>
    </reaction>
</comment>
<comment type="subunit">
    <text evidence="1">Core subunit of respiratory chain NADH dehydrogenase (Complex I) which is composed of 45 different subunits. Interacts with TMEM186. Interacts with TMEM242 (By similarity).</text>
</comment>
<comment type="subcellular location">
    <subcellularLocation>
        <location evidence="2">Mitochondrion inner membrane</location>
        <topology evidence="3">Multi-pass membrane protein</topology>
    </subcellularLocation>
</comment>
<comment type="similarity">
    <text evidence="4">Belongs to the complex I subunit 3 family.</text>
</comment>
<sequence length="115" mass="12911">MNMALTLFTNTALASLLVLIAFWLPQLNTYSEKASPYECGFDPMGSARLPFSMKFFLVAITFLLFDLEIALLLPLPWASHTDNLTTMLTMALLLISLLAASLAYEWTEKGLEWTE</sequence>
<name>NU3M_PHOVI</name>
<protein>
    <recommendedName>
        <fullName evidence="1">NADH-ubiquinone oxidoreductase chain 3</fullName>
        <ecNumber evidence="1">7.1.1.2</ecNumber>
    </recommendedName>
    <alternativeName>
        <fullName>NADH dehydrogenase subunit 3</fullName>
    </alternativeName>
</protein>
<evidence type="ECO:0000250" key="1">
    <source>
        <dbReference type="UniProtKB" id="P03897"/>
    </source>
</evidence>
<evidence type="ECO:0000250" key="2">
    <source>
        <dbReference type="UniProtKB" id="P03898"/>
    </source>
</evidence>
<evidence type="ECO:0000255" key="3"/>
<evidence type="ECO:0000305" key="4"/>
<feature type="chain" id="PRO_0000117802" description="NADH-ubiquinone oxidoreductase chain 3">
    <location>
        <begin position="1"/>
        <end position="115"/>
    </location>
</feature>
<feature type="transmembrane region" description="Helical" evidence="3">
    <location>
        <begin position="4"/>
        <end position="24"/>
    </location>
</feature>
<feature type="transmembrane region" description="Helical" evidence="3">
    <location>
        <begin position="55"/>
        <end position="75"/>
    </location>
</feature>
<feature type="transmembrane region" description="Helical" evidence="3">
    <location>
        <begin position="84"/>
        <end position="104"/>
    </location>
</feature>
<geneLocation type="mitochondrion"/>
<organism>
    <name type="scientific">Phoca vitulina</name>
    <name type="common">Harbor seal</name>
    <dbReference type="NCBI Taxonomy" id="9720"/>
    <lineage>
        <taxon>Eukaryota</taxon>
        <taxon>Metazoa</taxon>
        <taxon>Chordata</taxon>
        <taxon>Craniata</taxon>
        <taxon>Vertebrata</taxon>
        <taxon>Euteleostomi</taxon>
        <taxon>Mammalia</taxon>
        <taxon>Eutheria</taxon>
        <taxon>Laurasiatheria</taxon>
        <taxon>Carnivora</taxon>
        <taxon>Caniformia</taxon>
        <taxon>Pinnipedia</taxon>
        <taxon>Phocidae</taxon>
        <taxon>Phocinae</taxon>
        <taxon>Phoca</taxon>
    </lineage>
</organism>
<reference key="1">
    <citation type="journal article" date="1992" name="J. Mol. Evol.">
        <title>The complete mitochondrial DNA sequence of the harbor seal, Phoca vitulina.</title>
        <authorList>
            <person name="Arnason U."/>
            <person name="Johnsson E."/>
        </authorList>
    </citation>
    <scope>NUCLEOTIDE SEQUENCE [GENOMIC DNA]</scope>
</reference>
<reference key="2">
    <citation type="journal article" date="2006" name="Mol. Phylogenet. Evol.">
        <title>Pinniped phylogeny and a new hypothesis for their origin and dispersal.</title>
        <authorList>
            <person name="Arnason U."/>
            <person name="Gullberg A."/>
            <person name="Janke A."/>
            <person name="Kullberg M."/>
            <person name="Lehman N."/>
            <person name="Petrov E.A."/>
            <person name="Vainola R."/>
        </authorList>
    </citation>
    <scope>NUCLEOTIDE SEQUENCE [GENOMIC DNA]</scope>
</reference>